<evidence type="ECO:0000255" key="1">
    <source>
        <dbReference type="HAMAP-Rule" id="MF_01630"/>
    </source>
</evidence>
<accession>B5BDZ4</accession>
<proteinExistence type="inferred from homology"/>
<protein>
    <recommendedName>
        <fullName evidence="1">Periplasmic nitrate reductase</fullName>
        <ecNumber evidence="1">1.9.6.1</ecNumber>
    </recommendedName>
</protein>
<reference key="1">
    <citation type="journal article" date="2009" name="BMC Genomics">
        <title>Pseudogene accumulation in the evolutionary histories of Salmonella enterica serovars Paratyphi A and Typhi.</title>
        <authorList>
            <person name="Holt K.E."/>
            <person name="Thomson N.R."/>
            <person name="Wain J."/>
            <person name="Langridge G.C."/>
            <person name="Hasan R."/>
            <person name="Bhutta Z.A."/>
            <person name="Quail M.A."/>
            <person name="Norbertczak H."/>
            <person name="Walker D."/>
            <person name="Simmonds M."/>
            <person name="White B."/>
            <person name="Bason N."/>
            <person name="Mungall K."/>
            <person name="Dougan G."/>
            <person name="Parkhill J."/>
        </authorList>
    </citation>
    <scope>NUCLEOTIDE SEQUENCE [LARGE SCALE GENOMIC DNA]</scope>
    <source>
        <strain>AKU_12601</strain>
    </source>
</reference>
<gene>
    <name evidence="1" type="primary">napA</name>
    <name type="ordered locus">SSPA0569</name>
</gene>
<name>NAPA_SALPK</name>
<feature type="signal peptide" description="Tat-type signal" evidence="1">
    <location>
        <begin position="1"/>
        <end position="31"/>
    </location>
</feature>
<feature type="chain" id="PRO_1000186374" description="Periplasmic nitrate reductase" evidence="1">
    <location>
        <begin position="32"/>
        <end position="828"/>
    </location>
</feature>
<feature type="domain" description="4Fe-4S Mo/W bis-MGD-type" evidence="1">
    <location>
        <begin position="39"/>
        <end position="95"/>
    </location>
</feature>
<feature type="binding site" evidence="1">
    <location>
        <position position="46"/>
    </location>
    <ligand>
        <name>[4Fe-4S] cluster</name>
        <dbReference type="ChEBI" id="CHEBI:49883"/>
    </ligand>
</feature>
<feature type="binding site" evidence="1">
    <location>
        <position position="49"/>
    </location>
    <ligand>
        <name>[4Fe-4S] cluster</name>
        <dbReference type="ChEBI" id="CHEBI:49883"/>
    </ligand>
</feature>
<feature type="binding site" evidence="1">
    <location>
        <position position="53"/>
    </location>
    <ligand>
        <name>[4Fe-4S] cluster</name>
        <dbReference type="ChEBI" id="CHEBI:49883"/>
    </ligand>
</feature>
<feature type="binding site" evidence="1">
    <location>
        <position position="81"/>
    </location>
    <ligand>
        <name>[4Fe-4S] cluster</name>
        <dbReference type="ChEBI" id="CHEBI:49883"/>
    </ligand>
</feature>
<feature type="binding site" evidence="1">
    <location>
        <position position="83"/>
    </location>
    <ligand>
        <name>Mo-bis(molybdopterin guanine dinucleotide)</name>
        <dbReference type="ChEBI" id="CHEBI:60539"/>
    </ligand>
</feature>
<feature type="binding site" evidence="1">
    <location>
        <position position="150"/>
    </location>
    <ligand>
        <name>Mo-bis(molybdopterin guanine dinucleotide)</name>
        <dbReference type="ChEBI" id="CHEBI:60539"/>
    </ligand>
</feature>
<feature type="binding site" evidence="1">
    <location>
        <position position="175"/>
    </location>
    <ligand>
        <name>Mo-bis(molybdopterin guanine dinucleotide)</name>
        <dbReference type="ChEBI" id="CHEBI:60539"/>
    </ligand>
</feature>
<feature type="binding site" evidence="1">
    <location>
        <position position="179"/>
    </location>
    <ligand>
        <name>Mo-bis(molybdopterin guanine dinucleotide)</name>
        <dbReference type="ChEBI" id="CHEBI:60539"/>
    </ligand>
</feature>
<feature type="binding site" evidence="1">
    <location>
        <begin position="212"/>
        <end position="219"/>
    </location>
    <ligand>
        <name>Mo-bis(molybdopterin guanine dinucleotide)</name>
        <dbReference type="ChEBI" id="CHEBI:60539"/>
    </ligand>
</feature>
<feature type="binding site" evidence="1">
    <location>
        <begin position="243"/>
        <end position="247"/>
    </location>
    <ligand>
        <name>Mo-bis(molybdopterin guanine dinucleotide)</name>
        <dbReference type="ChEBI" id="CHEBI:60539"/>
    </ligand>
</feature>
<feature type="binding site" evidence="1">
    <location>
        <begin position="262"/>
        <end position="264"/>
    </location>
    <ligand>
        <name>Mo-bis(molybdopterin guanine dinucleotide)</name>
        <dbReference type="ChEBI" id="CHEBI:60539"/>
    </ligand>
</feature>
<feature type="binding site" evidence="1">
    <location>
        <position position="372"/>
    </location>
    <ligand>
        <name>Mo-bis(molybdopterin guanine dinucleotide)</name>
        <dbReference type="ChEBI" id="CHEBI:60539"/>
    </ligand>
</feature>
<feature type="binding site" evidence="1">
    <location>
        <position position="376"/>
    </location>
    <ligand>
        <name>Mo-bis(molybdopterin guanine dinucleotide)</name>
        <dbReference type="ChEBI" id="CHEBI:60539"/>
    </ligand>
</feature>
<feature type="binding site" evidence="1">
    <location>
        <position position="482"/>
    </location>
    <ligand>
        <name>Mo-bis(molybdopterin guanine dinucleotide)</name>
        <dbReference type="ChEBI" id="CHEBI:60539"/>
    </ligand>
</feature>
<feature type="binding site" evidence="1">
    <location>
        <begin position="508"/>
        <end position="509"/>
    </location>
    <ligand>
        <name>Mo-bis(molybdopterin guanine dinucleotide)</name>
        <dbReference type="ChEBI" id="CHEBI:60539"/>
    </ligand>
</feature>
<feature type="binding site" evidence="1">
    <location>
        <position position="531"/>
    </location>
    <ligand>
        <name>Mo-bis(molybdopterin guanine dinucleotide)</name>
        <dbReference type="ChEBI" id="CHEBI:60539"/>
    </ligand>
</feature>
<feature type="binding site" evidence="1">
    <location>
        <position position="558"/>
    </location>
    <ligand>
        <name>Mo-bis(molybdopterin guanine dinucleotide)</name>
        <dbReference type="ChEBI" id="CHEBI:60539"/>
    </ligand>
</feature>
<feature type="binding site" evidence="1">
    <location>
        <begin position="718"/>
        <end position="727"/>
    </location>
    <ligand>
        <name>Mo-bis(molybdopterin guanine dinucleotide)</name>
        <dbReference type="ChEBI" id="CHEBI:60539"/>
    </ligand>
</feature>
<feature type="binding site" evidence="1">
    <location>
        <position position="794"/>
    </location>
    <ligand>
        <name>substrate</name>
    </ligand>
</feature>
<feature type="binding site" evidence="1">
    <location>
        <position position="802"/>
    </location>
    <ligand>
        <name>Mo-bis(molybdopterin guanine dinucleotide)</name>
        <dbReference type="ChEBI" id="CHEBI:60539"/>
    </ligand>
</feature>
<feature type="binding site" evidence="1">
    <location>
        <position position="819"/>
    </location>
    <ligand>
        <name>Mo-bis(molybdopterin guanine dinucleotide)</name>
        <dbReference type="ChEBI" id="CHEBI:60539"/>
    </ligand>
</feature>
<comment type="function">
    <text evidence="1">Catalytic subunit of the periplasmic nitrate reductase complex NapAB. Receives electrons from NapB and catalyzes the reduction of nitrate to nitrite.</text>
</comment>
<comment type="catalytic activity">
    <reaction evidence="1">
        <text>2 Fe(II)-[cytochrome] + nitrate + 2 H(+) = 2 Fe(III)-[cytochrome] + nitrite + H2O</text>
        <dbReference type="Rhea" id="RHEA:12909"/>
        <dbReference type="Rhea" id="RHEA-COMP:11777"/>
        <dbReference type="Rhea" id="RHEA-COMP:11778"/>
        <dbReference type="ChEBI" id="CHEBI:15377"/>
        <dbReference type="ChEBI" id="CHEBI:15378"/>
        <dbReference type="ChEBI" id="CHEBI:16301"/>
        <dbReference type="ChEBI" id="CHEBI:17632"/>
        <dbReference type="ChEBI" id="CHEBI:29033"/>
        <dbReference type="ChEBI" id="CHEBI:29034"/>
        <dbReference type="EC" id="1.9.6.1"/>
    </reaction>
</comment>
<comment type="cofactor">
    <cofactor evidence="1">
        <name>[4Fe-4S] cluster</name>
        <dbReference type="ChEBI" id="CHEBI:49883"/>
    </cofactor>
    <text evidence="1">Binds 1 [4Fe-4S] cluster.</text>
</comment>
<comment type="cofactor">
    <cofactor evidence="1">
        <name>Mo-bis(molybdopterin guanine dinucleotide)</name>
        <dbReference type="ChEBI" id="CHEBI:60539"/>
    </cofactor>
    <text evidence="1">Binds 1 molybdenum-bis(molybdopterin guanine dinucleotide) (Mo-bis-MGD) cofactor per subunit.</text>
</comment>
<comment type="subunit">
    <text evidence="1">Component of the periplasmic nitrate reductase NapAB complex composed of NapA and NapB.</text>
</comment>
<comment type="subcellular location">
    <subcellularLocation>
        <location evidence="1">Periplasm</location>
    </subcellularLocation>
</comment>
<comment type="PTM">
    <text evidence="1">Predicted to be exported by the Tat system. The position of the signal peptide cleavage has not been experimentally proven.</text>
</comment>
<comment type="similarity">
    <text evidence="1">Belongs to the prokaryotic molybdopterin-containing oxidoreductase family. NasA/NapA/NarB subfamily.</text>
</comment>
<organism>
    <name type="scientific">Salmonella paratyphi A (strain AKU_12601)</name>
    <dbReference type="NCBI Taxonomy" id="554290"/>
    <lineage>
        <taxon>Bacteria</taxon>
        <taxon>Pseudomonadati</taxon>
        <taxon>Pseudomonadota</taxon>
        <taxon>Gammaproteobacteria</taxon>
        <taxon>Enterobacterales</taxon>
        <taxon>Enterobacteriaceae</taxon>
        <taxon>Salmonella</taxon>
    </lineage>
</organism>
<keyword id="KW-0004">4Fe-4S</keyword>
<keyword id="KW-0249">Electron transport</keyword>
<keyword id="KW-0408">Iron</keyword>
<keyword id="KW-0411">Iron-sulfur</keyword>
<keyword id="KW-0479">Metal-binding</keyword>
<keyword id="KW-0500">Molybdenum</keyword>
<keyword id="KW-0534">Nitrate assimilation</keyword>
<keyword id="KW-0560">Oxidoreductase</keyword>
<keyword id="KW-0574">Periplasm</keyword>
<keyword id="KW-0732">Signal</keyword>
<keyword id="KW-0813">Transport</keyword>
<dbReference type="EC" id="1.9.6.1" evidence="1"/>
<dbReference type="EMBL" id="FM200053">
    <property type="protein sequence ID" value="CAR58697.1"/>
    <property type="molecule type" value="Genomic_DNA"/>
</dbReference>
<dbReference type="RefSeq" id="WP_000778090.1">
    <property type="nucleotide sequence ID" value="NC_011147.1"/>
</dbReference>
<dbReference type="SMR" id="B5BDZ4"/>
<dbReference type="KEGG" id="sek:SSPA0569"/>
<dbReference type="HOGENOM" id="CLU_000422_13_4_6"/>
<dbReference type="Proteomes" id="UP000001869">
    <property type="component" value="Chromosome"/>
</dbReference>
<dbReference type="GO" id="GO:0016020">
    <property type="term" value="C:membrane"/>
    <property type="evidence" value="ECO:0007669"/>
    <property type="project" value="TreeGrafter"/>
</dbReference>
<dbReference type="GO" id="GO:0009325">
    <property type="term" value="C:nitrate reductase complex"/>
    <property type="evidence" value="ECO:0007669"/>
    <property type="project" value="TreeGrafter"/>
</dbReference>
<dbReference type="GO" id="GO:0042597">
    <property type="term" value="C:periplasmic space"/>
    <property type="evidence" value="ECO:0007669"/>
    <property type="project" value="UniProtKB-SubCell"/>
</dbReference>
<dbReference type="GO" id="GO:0051539">
    <property type="term" value="F:4 iron, 4 sulfur cluster binding"/>
    <property type="evidence" value="ECO:0007669"/>
    <property type="project" value="UniProtKB-KW"/>
</dbReference>
<dbReference type="GO" id="GO:0009055">
    <property type="term" value="F:electron transfer activity"/>
    <property type="evidence" value="ECO:0007669"/>
    <property type="project" value="UniProtKB-UniRule"/>
</dbReference>
<dbReference type="GO" id="GO:0005506">
    <property type="term" value="F:iron ion binding"/>
    <property type="evidence" value="ECO:0007669"/>
    <property type="project" value="UniProtKB-UniRule"/>
</dbReference>
<dbReference type="GO" id="GO:0030151">
    <property type="term" value="F:molybdenum ion binding"/>
    <property type="evidence" value="ECO:0007669"/>
    <property type="project" value="InterPro"/>
</dbReference>
<dbReference type="GO" id="GO:0043546">
    <property type="term" value="F:molybdopterin cofactor binding"/>
    <property type="evidence" value="ECO:0007669"/>
    <property type="project" value="InterPro"/>
</dbReference>
<dbReference type="GO" id="GO:0050140">
    <property type="term" value="F:nitrate reductase (cytochrome) activity"/>
    <property type="evidence" value="ECO:0007669"/>
    <property type="project" value="UniProtKB-EC"/>
</dbReference>
<dbReference type="GO" id="GO:0045333">
    <property type="term" value="P:cellular respiration"/>
    <property type="evidence" value="ECO:0007669"/>
    <property type="project" value="UniProtKB-ARBA"/>
</dbReference>
<dbReference type="GO" id="GO:0006777">
    <property type="term" value="P:Mo-molybdopterin cofactor biosynthetic process"/>
    <property type="evidence" value="ECO:0007669"/>
    <property type="project" value="UniProtKB-UniRule"/>
</dbReference>
<dbReference type="GO" id="GO:0042128">
    <property type="term" value="P:nitrate assimilation"/>
    <property type="evidence" value="ECO:0007669"/>
    <property type="project" value="UniProtKB-UniRule"/>
</dbReference>
<dbReference type="CDD" id="cd02791">
    <property type="entry name" value="MopB_CT_Nitrate-R-NapA-like"/>
    <property type="match status" value="1"/>
</dbReference>
<dbReference type="CDD" id="cd02754">
    <property type="entry name" value="MopB_Nitrate-R-NapA-like"/>
    <property type="match status" value="1"/>
</dbReference>
<dbReference type="FunFam" id="2.40.40.20:FF:000005">
    <property type="entry name" value="Periplasmic nitrate reductase"/>
    <property type="match status" value="1"/>
</dbReference>
<dbReference type="FunFam" id="3.40.228.10:FF:000001">
    <property type="entry name" value="Periplasmic nitrate reductase"/>
    <property type="match status" value="1"/>
</dbReference>
<dbReference type="Gene3D" id="2.40.40.20">
    <property type="match status" value="1"/>
</dbReference>
<dbReference type="Gene3D" id="3.30.200.210">
    <property type="match status" value="1"/>
</dbReference>
<dbReference type="Gene3D" id="3.40.50.740">
    <property type="match status" value="1"/>
</dbReference>
<dbReference type="Gene3D" id="3.40.228.10">
    <property type="entry name" value="Dimethylsulfoxide Reductase, domain 2"/>
    <property type="match status" value="1"/>
</dbReference>
<dbReference type="HAMAP" id="MF_01630">
    <property type="entry name" value="Nitrate_reduct_NapA"/>
    <property type="match status" value="1"/>
</dbReference>
<dbReference type="InterPro" id="IPR009010">
    <property type="entry name" value="Asp_de-COase-like_dom_sf"/>
</dbReference>
<dbReference type="InterPro" id="IPR041957">
    <property type="entry name" value="CT_Nitrate-R-NapA-like"/>
</dbReference>
<dbReference type="InterPro" id="IPR006657">
    <property type="entry name" value="MoPterin_dinucl-bd_dom"/>
</dbReference>
<dbReference type="InterPro" id="IPR006656">
    <property type="entry name" value="Mopterin_OxRdtase"/>
</dbReference>
<dbReference type="InterPro" id="IPR006963">
    <property type="entry name" value="Mopterin_OxRdtase_4Fe-4S_dom"/>
</dbReference>
<dbReference type="InterPro" id="IPR027467">
    <property type="entry name" value="MopterinOxRdtase_cofactor_BS"/>
</dbReference>
<dbReference type="InterPro" id="IPR010051">
    <property type="entry name" value="Periplasm_NO3_reductase_lsu"/>
</dbReference>
<dbReference type="InterPro" id="IPR050123">
    <property type="entry name" value="Prok_molybdopt-oxidoreductase"/>
</dbReference>
<dbReference type="InterPro" id="IPR006311">
    <property type="entry name" value="TAT_signal"/>
</dbReference>
<dbReference type="InterPro" id="IPR019546">
    <property type="entry name" value="TAT_signal_bac_arc"/>
</dbReference>
<dbReference type="NCBIfam" id="TIGR01706">
    <property type="entry name" value="NAPA"/>
    <property type="match status" value="1"/>
</dbReference>
<dbReference type="NCBIfam" id="NF010055">
    <property type="entry name" value="PRK13532.1"/>
    <property type="match status" value="1"/>
</dbReference>
<dbReference type="NCBIfam" id="TIGR01409">
    <property type="entry name" value="TAT_signal_seq"/>
    <property type="match status" value="1"/>
</dbReference>
<dbReference type="PANTHER" id="PTHR43105:SF11">
    <property type="entry name" value="PERIPLASMIC NITRATE REDUCTASE"/>
    <property type="match status" value="1"/>
</dbReference>
<dbReference type="PANTHER" id="PTHR43105">
    <property type="entry name" value="RESPIRATORY NITRATE REDUCTASE"/>
    <property type="match status" value="1"/>
</dbReference>
<dbReference type="Pfam" id="PF04879">
    <property type="entry name" value="Molybdop_Fe4S4"/>
    <property type="match status" value="1"/>
</dbReference>
<dbReference type="Pfam" id="PF00384">
    <property type="entry name" value="Molybdopterin"/>
    <property type="match status" value="1"/>
</dbReference>
<dbReference type="Pfam" id="PF01568">
    <property type="entry name" value="Molydop_binding"/>
    <property type="match status" value="1"/>
</dbReference>
<dbReference type="SMART" id="SM00926">
    <property type="entry name" value="Molybdop_Fe4S4"/>
    <property type="match status" value="1"/>
</dbReference>
<dbReference type="SUPFAM" id="SSF50692">
    <property type="entry name" value="ADC-like"/>
    <property type="match status" value="1"/>
</dbReference>
<dbReference type="SUPFAM" id="SSF53706">
    <property type="entry name" value="Formate dehydrogenase/DMSO reductase, domains 1-3"/>
    <property type="match status" value="1"/>
</dbReference>
<dbReference type="PROSITE" id="PS51669">
    <property type="entry name" value="4FE4S_MOW_BIS_MGD"/>
    <property type="match status" value="1"/>
</dbReference>
<dbReference type="PROSITE" id="PS00551">
    <property type="entry name" value="MOLYBDOPTERIN_PROK_1"/>
    <property type="match status" value="1"/>
</dbReference>
<dbReference type="PROSITE" id="PS51318">
    <property type="entry name" value="TAT"/>
    <property type="match status" value="1"/>
</dbReference>
<sequence>MKLSRRSFMKANAVAAAAAAAGLSVPGVARAVVGQQEAIKWDKAPCRFCGTGCGVLVGTQQGRVVACQGDPDAPVNRGLNCIKGYFLPKIMYGKDRLTQPMLRMKDGSYHKDGEFTPVSWEQAFDVMEEKFKTALKEKGPEAIGMFGSGQWTIWEGYAAAKLFKAGFRSNNIDPNARHCMASAVVGFMRTFGMDEPMGCYDDIEQADAFVLWGSNMAEMHPILWSRITNRRLSDPNVKVAVLSTFQHRSFELADNGIVFTPQSDLVILNYIANYIIQNNAVNQDFFTKHVNLRKGATDIGYGLRPTHPLEKAAKNPGSDASEPMSFDEYKAFVAEYTLDKTAEMTGVPKDQLEQLAQLYADPNKRVISYWTMGFNQHTRGVWANNLVYNLHLLTGKISQPGCGPFSLTGQPSACGTAREVGTFSHRLPADMVVTNEKHRDICEKHWQIPAGTIPAKVGLHAVAQDRALKDGKLNVYWVMCNNNMQAGPNINEDRMPGWRDPRNFIIVSDPYPTVSALSADLILPTAMWVEKEGAYGNAERRTQFWRQQIKAPGEAKSDLWQLVQFSRRFKTEEVWPEALLAQKPELRGKTLYDVLFATPAVSKFPLSELKEDQLNDESRELGFYLQKGLFEEYAWFGRGHGHDLAPFDDYHNARGLRWPVVEGKETQWRYSEGNDPYVKAGEGYKFYGKPDGKAVIFALPFEPAAESPDNEYDLWLSTGRVLEHWHTGSMTRRVPELHRAFPEAVVFIHPLDAKARDLRRGDKVKVSSRRGEVISIVETRGRNRPPQGLVYMPFFDAAQLVNNLTLDATDPLSKETDFKKCAVKLAKV</sequence>